<accession>Q9S9V1</accession>
<protein>
    <recommendedName>
        <fullName>Putative F-box only protein 15</fullName>
    </recommendedName>
</protein>
<evidence type="ECO:0000255" key="1">
    <source>
        <dbReference type="PROSITE-ProRule" id="PRU00080"/>
    </source>
</evidence>
<sequence length="378" mass="44097">MAFSKRVYRSLPFELVEEILKKTPAESLNRFKSTCKQWYGIITSKRFMYNHLDHSPERFIRIDDHKTVQIMDPMTGIFSDSPVPDVFRSPHSFASMVHCDGLMLCICSDSSYERTREANLAVWNPVTKKIKWIEPLDSYYETDYFGIGYDNTCRENYKIVRFSGPMSFDDTECEIYEFKSDSWRTLDTKYWDVYTQCRGVSVKGNMYWIADTKEKFILRFDFSMETFKNVCVCPPIGCTGRLGCFSGDRLPLLLQDTDFGGEEEVSTDIAVWLTNKLSDEVVSFTKYFNVTSPHLPLLQCHGDMARPGYFIGDHKNILAWCEGEVEEDDKWYTCITLYQIDQCGIRKQIETGRHRSFRYLDPFICSYVYVPSLIPVPE</sequence>
<feature type="chain" id="PRO_0000273548" description="Putative F-box only protein 15">
    <location>
        <begin position="1"/>
        <end position="378"/>
    </location>
</feature>
<feature type="domain" description="F-box" evidence="1">
    <location>
        <begin position="5"/>
        <end position="52"/>
    </location>
</feature>
<dbReference type="EMBL" id="AF149414">
    <property type="protein sequence ID" value="AAD48957.1"/>
    <property type="molecule type" value="Genomic_DNA"/>
</dbReference>
<dbReference type="EMBL" id="AL161501">
    <property type="protein sequence ID" value="CAB80834.1"/>
    <property type="molecule type" value="Genomic_DNA"/>
</dbReference>
<dbReference type="EMBL" id="CP002687">
    <property type="protein sequence ID" value="AEE82412.1"/>
    <property type="molecule type" value="Genomic_DNA"/>
</dbReference>
<dbReference type="PIR" id="B85059">
    <property type="entry name" value="B85059"/>
</dbReference>
<dbReference type="RefSeq" id="NP_567270.1">
    <property type="nucleotide sequence ID" value="NM_116707.1"/>
</dbReference>
<dbReference type="FunCoup" id="Q9S9V1">
    <property type="interactions" value="2"/>
</dbReference>
<dbReference type="STRING" id="3702.Q9S9V1"/>
<dbReference type="PaxDb" id="3702-AT4G04690.1"/>
<dbReference type="EnsemblPlants" id="AT4G04690.1">
    <property type="protein sequence ID" value="AT4G04690.1"/>
    <property type="gene ID" value="AT4G04690"/>
</dbReference>
<dbReference type="GeneID" id="825802"/>
<dbReference type="Gramene" id="AT4G04690.1">
    <property type="protein sequence ID" value="AT4G04690.1"/>
    <property type="gene ID" value="AT4G04690"/>
</dbReference>
<dbReference type="KEGG" id="ath:AT4G04690"/>
<dbReference type="Araport" id="AT4G04690"/>
<dbReference type="TAIR" id="AT4G04690"/>
<dbReference type="HOGENOM" id="CLU_034692_2_0_1"/>
<dbReference type="InParanoid" id="Q9S9V1"/>
<dbReference type="OMA" id="AWCEREV"/>
<dbReference type="PhylomeDB" id="Q9S9V1"/>
<dbReference type="PRO" id="PR:Q9S9V1"/>
<dbReference type="Proteomes" id="UP000006548">
    <property type="component" value="Chromosome 4"/>
</dbReference>
<dbReference type="ExpressionAtlas" id="Q9S9V1">
    <property type="expression patterns" value="baseline and differential"/>
</dbReference>
<dbReference type="CDD" id="cd22157">
    <property type="entry name" value="F-box_AtFBW1-like"/>
    <property type="match status" value="1"/>
</dbReference>
<dbReference type="Gene3D" id="1.20.1280.50">
    <property type="match status" value="1"/>
</dbReference>
<dbReference type="InterPro" id="IPR006527">
    <property type="entry name" value="F-box-assoc_dom_typ1"/>
</dbReference>
<dbReference type="InterPro" id="IPR017451">
    <property type="entry name" value="F-box-assoc_interact_dom"/>
</dbReference>
<dbReference type="InterPro" id="IPR036047">
    <property type="entry name" value="F-box-like_dom_sf"/>
</dbReference>
<dbReference type="InterPro" id="IPR001810">
    <property type="entry name" value="F-box_dom"/>
</dbReference>
<dbReference type="InterPro" id="IPR011043">
    <property type="entry name" value="Gal_Oxase/kelch_b-propeller"/>
</dbReference>
<dbReference type="InterPro" id="IPR050796">
    <property type="entry name" value="SCF_F-box_component"/>
</dbReference>
<dbReference type="NCBIfam" id="TIGR01640">
    <property type="entry name" value="F_box_assoc_1"/>
    <property type="match status" value="1"/>
</dbReference>
<dbReference type="PANTHER" id="PTHR31672">
    <property type="entry name" value="BNACNNG10540D PROTEIN"/>
    <property type="match status" value="1"/>
</dbReference>
<dbReference type="PANTHER" id="PTHR31672:SF13">
    <property type="entry name" value="F-BOX PROTEIN CPR30-LIKE"/>
    <property type="match status" value="1"/>
</dbReference>
<dbReference type="Pfam" id="PF00646">
    <property type="entry name" value="F-box"/>
    <property type="match status" value="1"/>
</dbReference>
<dbReference type="Pfam" id="PF07734">
    <property type="entry name" value="FBA_1"/>
    <property type="match status" value="1"/>
</dbReference>
<dbReference type="SMART" id="SM00256">
    <property type="entry name" value="FBOX"/>
    <property type="match status" value="1"/>
</dbReference>
<dbReference type="SUPFAM" id="SSF81383">
    <property type="entry name" value="F-box domain"/>
    <property type="match status" value="1"/>
</dbReference>
<dbReference type="SUPFAM" id="SSF50965">
    <property type="entry name" value="Galactose oxidase, central domain"/>
    <property type="match status" value="1"/>
</dbReference>
<dbReference type="PROSITE" id="PS50181">
    <property type="entry name" value="FBOX"/>
    <property type="match status" value="1"/>
</dbReference>
<proteinExistence type="predicted"/>
<name>FBX15_ARATH</name>
<organism>
    <name type="scientific">Arabidopsis thaliana</name>
    <name type="common">Mouse-ear cress</name>
    <dbReference type="NCBI Taxonomy" id="3702"/>
    <lineage>
        <taxon>Eukaryota</taxon>
        <taxon>Viridiplantae</taxon>
        <taxon>Streptophyta</taxon>
        <taxon>Embryophyta</taxon>
        <taxon>Tracheophyta</taxon>
        <taxon>Spermatophyta</taxon>
        <taxon>Magnoliopsida</taxon>
        <taxon>eudicotyledons</taxon>
        <taxon>Gunneridae</taxon>
        <taxon>Pentapetalae</taxon>
        <taxon>rosids</taxon>
        <taxon>malvids</taxon>
        <taxon>Brassicales</taxon>
        <taxon>Brassicaceae</taxon>
        <taxon>Camelineae</taxon>
        <taxon>Arabidopsis</taxon>
    </lineage>
</organism>
<keyword id="KW-1185">Reference proteome</keyword>
<reference key="1">
    <citation type="journal article" date="1999" name="Nature">
        <title>Sequence and analysis of chromosome 4 of the plant Arabidopsis thaliana.</title>
        <authorList>
            <person name="Mayer K.F.X."/>
            <person name="Schueller C."/>
            <person name="Wambutt R."/>
            <person name="Murphy G."/>
            <person name="Volckaert G."/>
            <person name="Pohl T."/>
            <person name="Duesterhoeft A."/>
            <person name="Stiekema W."/>
            <person name="Entian K.-D."/>
            <person name="Terryn N."/>
            <person name="Harris B."/>
            <person name="Ansorge W."/>
            <person name="Brandt P."/>
            <person name="Grivell L.A."/>
            <person name="Rieger M."/>
            <person name="Weichselgartner M."/>
            <person name="de Simone V."/>
            <person name="Obermaier B."/>
            <person name="Mache R."/>
            <person name="Mueller M."/>
            <person name="Kreis M."/>
            <person name="Delseny M."/>
            <person name="Puigdomenech P."/>
            <person name="Watson M."/>
            <person name="Schmidtheini T."/>
            <person name="Reichert B."/>
            <person name="Portetelle D."/>
            <person name="Perez-Alonso M."/>
            <person name="Boutry M."/>
            <person name="Bancroft I."/>
            <person name="Vos P."/>
            <person name="Hoheisel J."/>
            <person name="Zimmermann W."/>
            <person name="Wedler H."/>
            <person name="Ridley P."/>
            <person name="Langham S.-A."/>
            <person name="McCullagh B."/>
            <person name="Bilham L."/>
            <person name="Robben J."/>
            <person name="van der Schueren J."/>
            <person name="Grymonprez B."/>
            <person name="Chuang Y.-J."/>
            <person name="Vandenbussche F."/>
            <person name="Braeken M."/>
            <person name="Weltjens I."/>
            <person name="Voet M."/>
            <person name="Bastiaens I."/>
            <person name="Aert R."/>
            <person name="Defoor E."/>
            <person name="Weitzenegger T."/>
            <person name="Bothe G."/>
            <person name="Ramsperger U."/>
            <person name="Hilbert H."/>
            <person name="Braun M."/>
            <person name="Holzer E."/>
            <person name="Brandt A."/>
            <person name="Peters S."/>
            <person name="van Staveren M."/>
            <person name="Dirkse W."/>
            <person name="Mooijman P."/>
            <person name="Klein Lankhorst R."/>
            <person name="Rose M."/>
            <person name="Hauf J."/>
            <person name="Koetter P."/>
            <person name="Berneiser S."/>
            <person name="Hempel S."/>
            <person name="Feldpausch M."/>
            <person name="Lamberth S."/>
            <person name="Van den Daele H."/>
            <person name="De Keyser A."/>
            <person name="Buysshaert C."/>
            <person name="Gielen J."/>
            <person name="Villarroel R."/>
            <person name="De Clercq R."/>
            <person name="van Montagu M."/>
            <person name="Rogers J."/>
            <person name="Cronin A."/>
            <person name="Quail M.A."/>
            <person name="Bray-Allen S."/>
            <person name="Clark L."/>
            <person name="Doggett J."/>
            <person name="Hall S."/>
            <person name="Kay M."/>
            <person name="Lennard N."/>
            <person name="McLay K."/>
            <person name="Mayes R."/>
            <person name="Pettett A."/>
            <person name="Rajandream M.A."/>
            <person name="Lyne M."/>
            <person name="Benes V."/>
            <person name="Rechmann S."/>
            <person name="Borkova D."/>
            <person name="Bloecker H."/>
            <person name="Scharfe M."/>
            <person name="Grimm M."/>
            <person name="Loehnert T.-H."/>
            <person name="Dose S."/>
            <person name="de Haan M."/>
            <person name="Maarse A.C."/>
            <person name="Schaefer M."/>
            <person name="Mueller-Auer S."/>
            <person name="Gabel C."/>
            <person name="Fuchs M."/>
            <person name="Fartmann B."/>
            <person name="Granderath K."/>
            <person name="Dauner D."/>
            <person name="Herzl A."/>
            <person name="Neumann S."/>
            <person name="Argiriou A."/>
            <person name="Vitale D."/>
            <person name="Liguori R."/>
            <person name="Piravandi E."/>
            <person name="Massenet O."/>
            <person name="Quigley F."/>
            <person name="Clabauld G."/>
            <person name="Muendlein A."/>
            <person name="Felber R."/>
            <person name="Schnabl S."/>
            <person name="Hiller R."/>
            <person name="Schmidt W."/>
            <person name="Lecharny A."/>
            <person name="Aubourg S."/>
            <person name="Chefdor F."/>
            <person name="Cooke R."/>
            <person name="Berger C."/>
            <person name="Monfort A."/>
            <person name="Casacuberta E."/>
            <person name="Gibbons T."/>
            <person name="Weber N."/>
            <person name="Vandenbol M."/>
            <person name="Bargues M."/>
            <person name="Terol J."/>
            <person name="Torres A."/>
            <person name="Perez-Perez A."/>
            <person name="Purnelle B."/>
            <person name="Bent E."/>
            <person name="Johnson S."/>
            <person name="Tacon D."/>
            <person name="Jesse T."/>
            <person name="Heijnen L."/>
            <person name="Schwarz S."/>
            <person name="Scholler P."/>
            <person name="Heber S."/>
            <person name="Francs P."/>
            <person name="Bielke C."/>
            <person name="Frishman D."/>
            <person name="Haase D."/>
            <person name="Lemcke K."/>
            <person name="Mewes H.-W."/>
            <person name="Stocker S."/>
            <person name="Zaccaria P."/>
            <person name="Bevan M."/>
            <person name="Wilson R.K."/>
            <person name="de la Bastide M."/>
            <person name="Habermann K."/>
            <person name="Parnell L."/>
            <person name="Dedhia N."/>
            <person name="Gnoj L."/>
            <person name="Schutz K."/>
            <person name="Huang E."/>
            <person name="Spiegel L."/>
            <person name="Sekhon M."/>
            <person name="Murray J."/>
            <person name="Sheet P."/>
            <person name="Cordes M."/>
            <person name="Abu-Threideh J."/>
            <person name="Stoneking T."/>
            <person name="Kalicki J."/>
            <person name="Graves T."/>
            <person name="Harmon G."/>
            <person name="Edwards J."/>
            <person name="Latreille P."/>
            <person name="Courtney L."/>
            <person name="Cloud J."/>
            <person name="Abbott A."/>
            <person name="Scott K."/>
            <person name="Johnson D."/>
            <person name="Minx P."/>
            <person name="Bentley D."/>
            <person name="Fulton B."/>
            <person name="Miller N."/>
            <person name="Greco T."/>
            <person name="Kemp K."/>
            <person name="Kramer J."/>
            <person name="Fulton L."/>
            <person name="Mardis E."/>
            <person name="Dante M."/>
            <person name="Pepin K."/>
            <person name="Hillier L.W."/>
            <person name="Nelson J."/>
            <person name="Spieth J."/>
            <person name="Ryan E."/>
            <person name="Andrews S."/>
            <person name="Geisel C."/>
            <person name="Layman D."/>
            <person name="Du H."/>
            <person name="Ali J."/>
            <person name="Berghoff A."/>
            <person name="Jones K."/>
            <person name="Drone K."/>
            <person name="Cotton M."/>
            <person name="Joshu C."/>
            <person name="Antonoiu B."/>
            <person name="Zidanic M."/>
            <person name="Strong C."/>
            <person name="Sun H."/>
            <person name="Lamar B."/>
            <person name="Yordan C."/>
            <person name="Ma P."/>
            <person name="Zhong J."/>
            <person name="Preston R."/>
            <person name="Vil D."/>
            <person name="Shekher M."/>
            <person name="Matero A."/>
            <person name="Shah R."/>
            <person name="Swaby I.K."/>
            <person name="O'Shaughnessy A."/>
            <person name="Rodriguez M."/>
            <person name="Hoffman J."/>
            <person name="Till S."/>
            <person name="Granat S."/>
            <person name="Shohdy N."/>
            <person name="Hasegawa A."/>
            <person name="Hameed A."/>
            <person name="Lodhi M."/>
            <person name="Johnson A."/>
            <person name="Chen E."/>
            <person name="Marra M.A."/>
            <person name="Martienssen R."/>
            <person name="McCombie W.R."/>
        </authorList>
    </citation>
    <scope>NUCLEOTIDE SEQUENCE [LARGE SCALE GENOMIC DNA]</scope>
    <source>
        <strain>cv. Columbia</strain>
    </source>
</reference>
<reference key="2">
    <citation type="journal article" date="2017" name="Plant J.">
        <title>Araport11: a complete reannotation of the Arabidopsis thaliana reference genome.</title>
        <authorList>
            <person name="Cheng C.Y."/>
            <person name="Krishnakumar V."/>
            <person name="Chan A.P."/>
            <person name="Thibaud-Nissen F."/>
            <person name="Schobel S."/>
            <person name="Town C.D."/>
        </authorList>
    </citation>
    <scope>GENOME REANNOTATION</scope>
    <source>
        <strain>cv. Columbia</strain>
    </source>
</reference>
<reference key="3">
    <citation type="journal article" date="2000" name="Trends Plant Sci.">
        <title>F-box proteins in Arabidopsis.</title>
        <authorList>
            <person name="Xiao W."/>
            <person name="Jang J.-C."/>
        </authorList>
    </citation>
    <scope>GENE FAMILY</scope>
    <scope>NOMENCLATURE</scope>
</reference>
<gene>
    <name type="primary">FBX15</name>
    <name type="ordered locus">At4g04690</name>
    <name type="ORF">T19J18.6</name>
</gene>